<protein>
    <recommendedName>
        <fullName evidence="1">Nucleoside diphosphate kinase</fullName>
        <shortName evidence="1">NDK</shortName>
        <shortName evidence="1">NDP kinase</shortName>
        <ecNumber evidence="1">2.7.4.6</ecNumber>
    </recommendedName>
    <alternativeName>
        <fullName evidence="1">Nucleoside-2-P kinase</fullName>
    </alternativeName>
</protein>
<keyword id="KW-0067">ATP-binding</keyword>
<keyword id="KW-0963">Cytoplasm</keyword>
<keyword id="KW-0418">Kinase</keyword>
<keyword id="KW-0460">Magnesium</keyword>
<keyword id="KW-0479">Metal-binding</keyword>
<keyword id="KW-0546">Nucleotide metabolism</keyword>
<keyword id="KW-0547">Nucleotide-binding</keyword>
<keyword id="KW-0597">Phosphoprotein</keyword>
<keyword id="KW-1185">Reference proteome</keyword>
<keyword id="KW-0808">Transferase</keyword>
<dbReference type="EC" id="2.7.4.6" evidence="1"/>
<dbReference type="EMBL" id="CP001634">
    <property type="protein sequence ID" value="ACR79605.1"/>
    <property type="molecule type" value="Genomic_DNA"/>
</dbReference>
<dbReference type="RefSeq" id="WP_015868267.1">
    <property type="nucleotide sequence ID" value="NC_012785.1"/>
</dbReference>
<dbReference type="SMR" id="C5CGM3"/>
<dbReference type="STRING" id="521045.Kole_0896"/>
<dbReference type="KEGG" id="kol:Kole_0896"/>
<dbReference type="eggNOG" id="COG0105">
    <property type="taxonomic scope" value="Bacteria"/>
</dbReference>
<dbReference type="HOGENOM" id="CLU_060216_6_3_0"/>
<dbReference type="OrthoDB" id="9801161at2"/>
<dbReference type="Proteomes" id="UP000002382">
    <property type="component" value="Chromosome"/>
</dbReference>
<dbReference type="GO" id="GO:0005737">
    <property type="term" value="C:cytoplasm"/>
    <property type="evidence" value="ECO:0007669"/>
    <property type="project" value="UniProtKB-SubCell"/>
</dbReference>
<dbReference type="GO" id="GO:0005524">
    <property type="term" value="F:ATP binding"/>
    <property type="evidence" value="ECO:0007669"/>
    <property type="project" value="UniProtKB-UniRule"/>
</dbReference>
<dbReference type="GO" id="GO:0046872">
    <property type="term" value="F:metal ion binding"/>
    <property type="evidence" value="ECO:0007669"/>
    <property type="project" value="UniProtKB-KW"/>
</dbReference>
<dbReference type="GO" id="GO:0004550">
    <property type="term" value="F:nucleoside diphosphate kinase activity"/>
    <property type="evidence" value="ECO:0007669"/>
    <property type="project" value="UniProtKB-UniRule"/>
</dbReference>
<dbReference type="GO" id="GO:0006241">
    <property type="term" value="P:CTP biosynthetic process"/>
    <property type="evidence" value="ECO:0007669"/>
    <property type="project" value="UniProtKB-UniRule"/>
</dbReference>
<dbReference type="GO" id="GO:0006183">
    <property type="term" value="P:GTP biosynthetic process"/>
    <property type="evidence" value="ECO:0007669"/>
    <property type="project" value="UniProtKB-UniRule"/>
</dbReference>
<dbReference type="GO" id="GO:0006228">
    <property type="term" value="P:UTP biosynthetic process"/>
    <property type="evidence" value="ECO:0007669"/>
    <property type="project" value="UniProtKB-UniRule"/>
</dbReference>
<dbReference type="CDD" id="cd04413">
    <property type="entry name" value="NDPk_I"/>
    <property type="match status" value="1"/>
</dbReference>
<dbReference type="FunFam" id="3.30.70.141:FF:000003">
    <property type="entry name" value="Nucleoside diphosphate kinase"/>
    <property type="match status" value="1"/>
</dbReference>
<dbReference type="Gene3D" id="3.30.70.141">
    <property type="entry name" value="Nucleoside diphosphate kinase-like domain"/>
    <property type="match status" value="1"/>
</dbReference>
<dbReference type="HAMAP" id="MF_00451">
    <property type="entry name" value="NDP_kinase"/>
    <property type="match status" value="1"/>
</dbReference>
<dbReference type="InterPro" id="IPR034907">
    <property type="entry name" value="NDK-like_dom"/>
</dbReference>
<dbReference type="InterPro" id="IPR036850">
    <property type="entry name" value="NDK-like_dom_sf"/>
</dbReference>
<dbReference type="InterPro" id="IPR001564">
    <property type="entry name" value="Nucleoside_diP_kinase"/>
</dbReference>
<dbReference type="InterPro" id="IPR023005">
    <property type="entry name" value="Nucleoside_diP_kinase_AS"/>
</dbReference>
<dbReference type="NCBIfam" id="NF001908">
    <property type="entry name" value="PRK00668.1"/>
    <property type="match status" value="1"/>
</dbReference>
<dbReference type="PANTHER" id="PTHR11349">
    <property type="entry name" value="NUCLEOSIDE DIPHOSPHATE KINASE"/>
    <property type="match status" value="1"/>
</dbReference>
<dbReference type="Pfam" id="PF00334">
    <property type="entry name" value="NDK"/>
    <property type="match status" value="1"/>
</dbReference>
<dbReference type="PRINTS" id="PR01243">
    <property type="entry name" value="NUCDPKINASE"/>
</dbReference>
<dbReference type="SMART" id="SM00562">
    <property type="entry name" value="NDK"/>
    <property type="match status" value="1"/>
</dbReference>
<dbReference type="SUPFAM" id="SSF54919">
    <property type="entry name" value="Nucleoside diphosphate kinase, NDK"/>
    <property type="match status" value="1"/>
</dbReference>
<dbReference type="PROSITE" id="PS00469">
    <property type="entry name" value="NDPK"/>
    <property type="match status" value="1"/>
</dbReference>
<dbReference type="PROSITE" id="PS51374">
    <property type="entry name" value="NDPK_LIKE"/>
    <property type="match status" value="1"/>
</dbReference>
<name>NDK_KOSOT</name>
<gene>
    <name evidence="1" type="primary">ndk</name>
    <name type="ordered locus">Kole_0896</name>
</gene>
<reference key="1">
    <citation type="submission" date="2009-06" db="EMBL/GenBank/DDBJ databases">
        <title>Complete sequence of Thermotogales bacterium TBF 19.5.1.</title>
        <authorList>
            <consortium name="US DOE Joint Genome Institute"/>
            <person name="Lucas S."/>
            <person name="Copeland A."/>
            <person name="Lapidus A."/>
            <person name="Glavina del Rio T."/>
            <person name="Tice H."/>
            <person name="Bruce D."/>
            <person name="Goodwin L."/>
            <person name="Pitluck S."/>
            <person name="Chertkov O."/>
            <person name="Brettin T."/>
            <person name="Detter J.C."/>
            <person name="Han C."/>
            <person name="Schmutz J."/>
            <person name="Larimer F."/>
            <person name="Land M."/>
            <person name="Hauser L."/>
            <person name="Kyrpides N."/>
            <person name="Ovchinnikova G."/>
            <person name="Noll K."/>
        </authorList>
    </citation>
    <scope>NUCLEOTIDE SEQUENCE [LARGE SCALE GENOMIC DNA]</scope>
    <source>
        <strain>ATCC BAA-1733 / DSM 21960 / TBF 19.5.1</strain>
    </source>
</reference>
<sequence>MERTFVYLKPNTIQRQLIGEVISRFERKGLKIVALKMLKMTMEQAEKLYEEHKGKDFYKPLLKFVTSGPIVAMILEGPRAVEVVRHVIGKTDPLEANSGTIRGEFGVTIRKNIVHASDSPEHAKHEMSIFFDTSEIVDYKLLLEEQF</sequence>
<organism>
    <name type="scientific">Kosmotoga olearia (strain ATCC BAA-1733 / DSM 21960 / TBF 19.5.1)</name>
    <dbReference type="NCBI Taxonomy" id="521045"/>
    <lineage>
        <taxon>Bacteria</taxon>
        <taxon>Thermotogati</taxon>
        <taxon>Thermotogota</taxon>
        <taxon>Thermotogae</taxon>
        <taxon>Kosmotogales</taxon>
        <taxon>Kosmotogaceae</taxon>
        <taxon>Kosmotoga</taxon>
    </lineage>
</organism>
<comment type="function">
    <text evidence="1">Major role in the synthesis of nucleoside triphosphates other than ATP. The ATP gamma phosphate is transferred to the NDP beta phosphate via a ping-pong mechanism, using a phosphorylated active-site intermediate.</text>
</comment>
<comment type="catalytic activity">
    <reaction evidence="1">
        <text>a 2'-deoxyribonucleoside 5'-diphosphate + ATP = a 2'-deoxyribonucleoside 5'-triphosphate + ADP</text>
        <dbReference type="Rhea" id="RHEA:44640"/>
        <dbReference type="ChEBI" id="CHEBI:30616"/>
        <dbReference type="ChEBI" id="CHEBI:61560"/>
        <dbReference type="ChEBI" id="CHEBI:73316"/>
        <dbReference type="ChEBI" id="CHEBI:456216"/>
        <dbReference type="EC" id="2.7.4.6"/>
    </reaction>
</comment>
<comment type="catalytic activity">
    <reaction evidence="1">
        <text>a ribonucleoside 5'-diphosphate + ATP = a ribonucleoside 5'-triphosphate + ADP</text>
        <dbReference type="Rhea" id="RHEA:18113"/>
        <dbReference type="ChEBI" id="CHEBI:30616"/>
        <dbReference type="ChEBI" id="CHEBI:57930"/>
        <dbReference type="ChEBI" id="CHEBI:61557"/>
        <dbReference type="ChEBI" id="CHEBI:456216"/>
        <dbReference type="EC" id="2.7.4.6"/>
    </reaction>
</comment>
<comment type="cofactor">
    <cofactor evidence="1">
        <name>Mg(2+)</name>
        <dbReference type="ChEBI" id="CHEBI:18420"/>
    </cofactor>
</comment>
<comment type="subunit">
    <text evidence="1">Homotetramer.</text>
</comment>
<comment type="subcellular location">
    <subcellularLocation>
        <location evidence="1">Cytoplasm</location>
    </subcellularLocation>
</comment>
<comment type="similarity">
    <text evidence="1">Belongs to the NDK family.</text>
</comment>
<feature type="chain" id="PRO_1000206215" description="Nucleoside diphosphate kinase">
    <location>
        <begin position="1"/>
        <end position="147"/>
    </location>
</feature>
<feature type="active site" description="Pros-phosphohistidine intermediate" evidence="1">
    <location>
        <position position="115"/>
    </location>
</feature>
<feature type="binding site" evidence="1">
    <location>
        <position position="9"/>
    </location>
    <ligand>
        <name>ATP</name>
        <dbReference type="ChEBI" id="CHEBI:30616"/>
    </ligand>
</feature>
<feature type="binding site" evidence="1">
    <location>
        <position position="57"/>
    </location>
    <ligand>
        <name>ATP</name>
        <dbReference type="ChEBI" id="CHEBI:30616"/>
    </ligand>
</feature>
<feature type="binding site" evidence="1">
    <location>
        <position position="85"/>
    </location>
    <ligand>
        <name>ATP</name>
        <dbReference type="ChEBI" id="CHEBI:30616"/>
    </ligand>
</feature>
<feature type="binding site" evidence="1">
    <location>
        <position position="91"/>
    </location>
    <ligand>
        <name>ATP</name>
        <dbReference type="ChEBI" id="CHEBI:30616"/>
    </ligand>
</feature>
<feature type="binding site" evidence="1">
    <location>
        <position position="102"/>
    </location>
    <ligand>
        <name>ATP</name>
        <dbReference type="ChEBI" id="CHEBI:30616"/>
    </ligand>
</feature>
<feature type="binding site" evidence="1">
    <location>
        <position position="112"/>
    </location>
    <ligand>
        <name>ATP</name>
        <dbReference type="ChEBI" id="CHEBI:30616"/>
    </ligand>
</feature>
<proteinExistence type="inferred from homology"/>
<evidence type="ECO:0000255" key="1">
    <source>
        <dbReference type="HAMAP-Rule" id="MF_00451"/>
    </source>
</evidence>
<accession>C5CGM3</accession>